<gene>
    <name evidence="1" type="primary">xseB</name>
    <name type="ordered locus">TM1040_2922</name>
</gene>
<evidence type="ECO:0000255" key="1">
    <source>
        <dbReference type="HAMAP-Rule" id="MF_00337"/>
    </source>
</evidence>
<dbReference type="EC" id="3.1.11.6" evidence="1"/>
<dbReference type="EMBL" id="CP000377">
    <property type="protein sequence ID" value="ABF65654.1"/>
    <property type="molecule type" value="Genomic_DNA"/>
</dbReference>
<dbReference type="RefSeq" id="WP_011540235.1">
    <property type="nucleotide sequence ID" value="NC_008044.1"/>
</dbReference>
<dbReference type="SMR" id="Q1GCG2"/>
<dbReference type="STRING" id="292414.TM1040_2922"/>
<dbReference type="KEGG" id="sit:TM1040_2922"/>
<dbReference type="eggNOG" id="COG1722">
    <property type="taxonomic scope" value="Bacteria"/>
</dbReference>
<dbReference type="HOGENOM" id="CLU_145918_0_3_5"/>
<dbReference type="OrthoDB" id="9808145at2"/>
<dbReference type="Proteomes" id="UP000000636">
    <property type="component" value="Chromosome"/>
</dbReference>
<dbReference type="GO" id="GO:0005829">
    <property type="term" value="C:cytosol"/>
    <property type="evidence" value="ECO:0007669"/>
    <property type="project" value="TreeGrafter"/>
</dbReference>
<dbReference type="GO" id="GO:0009318">
    <property type="term" value="C:exodeoxyribonuclease VII complex"/>
    <property type="evidence" value="ECO:0007669"/>
    <property type="project" value="InterPro"/>
</dbReference>
<dbReference type="GO" id="GO:0008855">
    <property type="term" value="F:exodeoxyribonuclease VII activity"/>
    <property type="evidence" value="ECO:0007669"/>
    <property type="project" value="UniProtKB-UniRule"/>
</dbReference>
<dbReference type="GO" id="GO:0006308">
    <property type="term" value="P:DNA catabolic process"/>
    <property type="evidence" value="ECO:0007669"/>
    <property type="project" value="UniProtKB-UniRule"/>
</dbReference>
<dbReference type="Gene3D" id="1.10.287.1040">
    <property type="entry name" value="Exonuclease VII, small subunit"/>
    <property type="match status" value="1"/>
</dbReference>
<dbReference type="HAMAP" id="MF_00337">
    <property type="entry name" value="Exonuc_7_S"/>
    <property type="match status" value="1"/>
</dbReference>
<dbReference type="InterPro" id="IPR003761">
    <property type="entry name" value="Exonuc_VII_S"/>
</dbReference>
<dbReference type="InterPro" id="IPR037004">
    <property type="entry name" value="Exonuc_VII_ssu_sf"/>
</dbReference>
<dbReference type="NCBIfam" id="NF002139">
    <property type="entry name" value="PRK00977.1-3"/>
    <property type="match status" value="1"/>
</dbReference>
<dbReference type="NCBIfam" id="TIGR01280">
    <property type="entry name" value="xseB"/>
    <property type="match status" value="1"/>
</dbReference>
<dbReference type="PANTHER" id="PTHR34137">
    <property type="entry name" value="EXODEOXYRIBONUCLEASE 7 SMALL SUBUNIT"/>
    <property type="match status" value="1"/>
</dbReference>
<dbReference type="PANTHER" id="PTHR34137:SF1">
    <property type="entry name" value="EXODEOXYRIBONUCLEASE 7 SMALL SUBUNIT"/>
    <property type="match status" value="1"/>
</dbReference>
<dbReference type="Pfam" id="PF02609">
    <property type="entry name" value="Exonuc_VII_S"/>
    <property type="match status" value="1"/>
</dbReference>
<dbReference type="PIRSF" id="PIRSF006488">
    <property type="entry name" value="Exonuc_VII_S"/>
    <property type="match status" value="1"/>
</dbReference>
<dbReference type="SUPFAM" id="SSF116842">
    <property type="entry name" value="XseB-like"/>
    <property type="match status" value="1"/>
</dbReference>
<proteinExistence type="inferred from homology"/>
<name>EX7S_RUEST</name>
<keyword id="KW-0963">Cytoplasm</keyword>
<keyword id="KW-0269">Exonuclease</keyword>
<keyword id="KW-0378">Hydrolase</keyword>
<keyword id="KW-0540">Nuclease</keyword>
<keyword id="KW-1185">Reference proteome</keyword>
<feature type="chain" id="PRO_1000059723" description="Exodeoxyribonuclease 7 small subunit">
    <location>
        <begin position="1"/>
        <end position="81"/>
    </location>
</feature>
<reference key="1">
    <citation type="submission" date="2006-05" db="EMBL/GenBank/DDBJ databases">
        <title>Complete sequence of chromosome of Silicibacter sp. TM1040.</title>
        <authorList>
            <consortium name="US DOE Joint Genome Institute"/>
            <person name="Copeland A."/>
            <person name="Lucas S."/>
            <person name="Lapidus A."/>
            <person name="Barry K."/>
            <person name="Detter J.C."/>
            <person name="Glavina del Rio T."/>
            <person name="Hammon N."/>
            <person name="Israni S."/>
            <person name="Dalin E."/>
            <person name="Tice H."/>
            <person name="Pitluck S."/>
            <person name="Brettin T."/>
            <person name="Bruce D."/>
            <person name="Han C."/>
            <person name="Tapia R."/>
            <person name="Goodwin L."/>
            <person name="Thompson L.S."/>
            <person name="Gilna P."/>
            <person name="Schmutz J."/>
            <person name="Larimer F."/>
            <person name="Land M."/>
            <person name="Hauser L."/>
            <person name="Kyrpides N."/>
            <person name="Kim E."/>
            <person name="Belas R."/>
            <person name="Moran M.A."/>
            <person name="Buchan A."/>
            <person name="Gonzalez J.M."/>
            <person name="Schell M.A."/>
            <person name="Sun F."/>
            <person name="Richardson P."/>
        </authorList>
    </citation>
    <scope>NUCLEOTIDE SEQUENCE [LARGE SCALE GENOMIC DNA]</scope>
    <source>
        <strain>TM1040</strain>
    </source>
</reference>
<organism>
    <name type="scientific">Ruegeria sp. (strain TM1040)</name>
    <name type="common">Silicibacter sp.</name>
    <dbReference type="NCBI Taxonomy" id="292414"/>
    <lineage>
        <taxon>Bacteria</taxon>
        <taxon>Pseudomonadati</taxon>
        <taxon>Pseudomonadota</taxon>
        <taxon>Alphaproteobacteria</taxon>
        <taxon>Rhodobacterales</taxon>
        <taxon>Roseobacteraceae</taxon>
        <taxon>Ruegeria</taxon>
    </lineage>
</organism>
<protein>
    <recommendedName>
        <fullName evidence="1">Exodeoxyribonuclease 7 small subunit</fullName>
        <ecNumber evidence="1">3.1.11.6</ecNumber>
    </recommendedName>
    <alternativeName>
        <fullName evidence="1">Exodeoxyribonuclease VII small subunit</fullName>
        <shortName evidence="1">Exonuclease VII small subunit</shortName>
    </alternativeName>
</protein>
<accession>Q1GCG2</accession>
<comment type="function">
    <text evidence="1">Bidirectionally degrades single-stranded DNA into large acid-insoluble oligonucleotides, which are then degraded further into small acid-soluble oligonucleotides.</text>
</comment>
<comment type="catalytic activity">
    <reaction evidence="1">
        <text>Exonucleolytic cleavage in either 5'- to 3'- or 3'- to 5'-direction to yield nucleoside 5'-phosphates.</text>
        <dbReference type="EC" id="3.1.11.6"/>
    </reaction>
</comment>
<comment type="subunit">
    <text evidence="1">Heterooligomer composed of large and small subunits.</text>
</comment>
<comment type="subcellular location">
    <subcellularLocation>
        <location evidence="1">Cytoplasm</location>
    </subcellularLocation>
</comment>
<comment type="similarity">
    <text evidence="1">Belongs to the XseB family.</text>
</comment>
<sequence length="81" mass="8869">MTTETPVEEMSFETAMQELERVVDQLERGDVALDASISLYERGAALKKRCEDELKRAEEKVAAITLDANGQPTGTQPLDAG</sequence>